<reference key="1">
    <citation type="submission" date="2007-11" db="EMBL/GenBank/DDBJ databases">
        <title>Complete sequence of chromosome of Shewanella baltica OS195.</title>
        <authorList>
            <consortium name="US DOE Joint Genome Institute"/>
            <person name="Copeland A."/>
            <person name="Lucas S."/>
            <person name="Lapidus A."/>
            <person name="Barry K."/>
            <person name="Glavina del Rio T."/>
            <person name="Dalin E."/>
            <person name="Tice H."/>
            <person name="Pitluck S."/>
            <person name="Chain P."/>
            <person name="Malfatti S."/>
            <person name="Shin M."/>
            <person name="Vergez L."/>
            <person name="Schmutz J."/>
            <person name="Larimer F."/>
            <person name="Land M."/>
            <person name="Hauser L."/>
            <person name="Kyrpides N."/>
            <person name="Kim E."/>
            <person name="Brettar I."/>
            <person name="Rodrigues J."/>
            <person name="Konstantinidis K."/>
            <person name="Klappenbach J."/>
            <person name="Hofle M."/>
            <person name="Tiedje J."/>
            <person name="Richardson P."/>
        </authorList>
    </citation>
    <scope>NUCLEOTIDE SEQUENCE [LARGE SCALE GENOMIC DNA]</scope>
    <source>
        <strain>OS195</strain>
    </source>
</reference>
<evidence type="ECO:0000255" key="1">
    <source>
        <dbReference type="HAMAP-Rule" id="MF_00380"/>
    </source>
</evidence>
<evidence type="ECO:0000256" key="2">
    <source>
        <dbReference type="SAM" id="MobiDB-lite"/>
    </source>
</evidence>
<comment type="function">
    <text evidence="1">This protein is one of the two subunits of integration host factor, a specific DNA-binding protein that functions in genetic recombination as well as in transcriptional and translational control.</text>
</comment>
<comment type="subunit">
    <text evidence="1">Heterodimer of an alpha and a beta chain.</text>
</comment>
<comment type="similarity">
    <text evidence="1">Belongs to the bacterial histone-like protein family.</text>
</comment>
<name>IHFA_SHEB9</name>
<sequence>MALTKAEMAEHLFETLGMNKRVAKEMVESFFEEIRGALESGEQVKLSGFGNFDLRDKNQRPGRNPKTGEDIPISARRVVTFRPGQKLKTRVEAANTGK</sequence>
<dbReference type="EMBL" id="CP000891">
    <property type="protein sequence ID" value="ABX49080.1"/>
    <property type="molecule type" value="Genomic_DNA"/>
</dbReference>
<dbReference type="RefSeq" id="WP_006081370.1">
    <property type="nucleotide sequence ID" value="NC_009997.1"/>
</dbReference>
<dbReference type="SMR" id="A9KYZ2"/>
<dbReference type="GeneID" id="67443386"/>
<dbReference type="KEGG" id="sbn:Sbal195_1909"/>
<dbReference type="HOGENOM" id="CLU_105066_1_3_6"/>
<dbReference type="Proteomes" id="UP000000770">
    <property type="component" value="Chromosome"/>
</dbReference>
<dbReference type="GO" id="GO:0005829">
    <property type="term" value="C:cytosol"/>
    <property type="evidence" value="ECO:0007669"/>
    <property type="project" value="TreeGrafter"/>
</dbReference>
<dbReference type="GO" id="GO:0003677">
    <property type="term" value="F:DNA binding"/>
    <property type="evidence" value="ECO:0007669"/>
    <property type="project" value="UniProtKB-UniRule"/>
</dbReference>
<dbReference type="GO" id="GO:0030527">
    <property type="term" value="F:structural constituent of chromatin"/>
    <property type="evidence" value="ECO:0007669"/>
    <property type="project" value="InterPro"/>
</dbReference>
<dbReference type="GO" id="GO:0006310">
    <property type="term" value="P:DNA recombination"/>
    <property type="evidence" value="ECO:0007669"/>
    <property type="project" value="UniProtKB-UniRule"/>
</dbReference>
<dbReference type="GO" id="GO:0009893">
    <property type="term" value="P:positive regulation of metabolic process"/>
    <property type="evidence" value="ECO:0007669"/>
    <property type="project" value="UniProtKB-ARBA"/>
</dbReference>
<dbReference type="GO" id="GO:0006355">
    <property type="term" value="P:regulation of DNA-templated transcription"/>
    <property type="evidence" value="ECO:0007669"/>
    <property type="project" value="UniProtKB-UniRule"/>
</dbReference>
<dbReference type="GO" id="GO:0006417">
    <property type="term" value="P:regulation of translation"/>
    <property type="evidence" value="ECO:0007669"/>
    <property type="project" value="UniProtKB-UniRule"/>
</dbReference>
<dbReference type="CDD" id="cd13835">
    <property type="entry name" value="IHF_A"/>
    <property type="match status" value="1"/>
</dbReference>
<dbReference type="FunFam" id="4.10.520.10:FF:000002">
    <property type="entry name" value="Integration host factor subunit alpha"/>
    <property type="match status" value="1"/>
</dbReference>
<dbReference type="Gene3D" id="4.10.520.10">
    <property type="entry name" value="IHF-like DNA-binding proteins"/>
    <property type="match status" value="1"/>
</dbReference>
<dbReference type="HAMAP" id="MF_00380">
    <property type="entry name" value="IHF_alpha"/>
    <property type="match status" value="1"/>
</dbReference>
<dbReference type="InterPro" id="IPR000119">
    <property type="entry name" value="Hist_DNA-bd"/>
</dbReference>
<dbReference type="InterPro" id="IPR020816">
    <property type="entry name" value="Histone-like_DNA-bd_CS"/>
</dbReference>
<dbReference type="InterPro" id="IPR010992">
    <property type="entry name" value="IHF-like_DNA-bd_dom_sf"/>
</dbReference>
<dbReference type="InterPro" id="IPR005684">
    <property type="entry name" value="IHF_alpha"/>
</dbReference>
<dbReference type="NCBIfam" id="TIGR00987">
    <property type="entry name" value="himA"/>
    <property type="match status" value="1"/>
</dbReference>
<dbReference type="NCBIfam" id="NF001401">
    <property type="entry name" value="PRK00285.1"/>
    <property type="match status" value="1"/>
</dbReference>
<dbReference type="PANTHER" id="PTHR33175">
    <property type="entry name" value="DNA-BINDING PROTEIN HU"/>
    <property type="match status" value="1"/>
</dbReference>
<dbReference type="PANTHER" id="PTHR33175:SF2">
    <property type="entry name" value="INTEGRATION HOST FACTOR SUBUNIT ALPHA"/>
    <property type="match status" value="1"/>
</dbReference>
<dbReference type="Pfam" id="PF00216">
    <property type="entry name" value="Bac_DNA_binding"/>
    <property type="match status" value="1"/>
</dbReference>
<dbReference type="PRINTS" id="PR01727">
    <property type="entry name" value="DNABINDINGHU"/>
</dbReference>
<dbReference type="SMART" id="SM00411">
    <property type="entry name" value="BHL"/>
    <property type="match status" value="1"/>
</dbReference>
<dbReference type="SUPFAM" id="SSF47729">
    <property type="entry name" value="IHF-like DNA-binding proteins"/>
    <property type="match status" value="1"/>
</dbReference>
<dbReference type="PROSITE" id="PS00045">
    <property type="entry name" value="HISTONE_LIKE"/>
    <property type="match status" value="1"/>
</dbReference>
<gene>
    <name evidence="1" type="primary">ihfA</name>
    <name evidence="1" type="synonym">himA</name>
    <name type="ordered locus">Sbal195_1909</name>
</gene>
<proteinExistence type="inferred from homology"/>
<keyword id="KW-0233">DNA recombination</keyword>
<keyword id="KW-0238">DNA-binding</keyword>
<keyword id="KW-0804">Transcription</keyword>
<keyword id="KW-0805">Transcription regulation</keyword>
<keyword id="KW-0810">Translation regulation</keyword>
<organism>
    <name type="scientific">Shewanella baltica (strain OS195)</name>
    <dbReference type="NCBI Taxonomy" id="399599"/>
    <lineage>
        <taxon>Bacteria</taxon>
        <taxon>Pseudomonadati</taxon>
        <taxon>Pseudomonadota</taxon>
        <taxon>Gammaproteobacteria</taxon>
        <taxon>Alteromonadales</taxon>
        <taxon>Shewanellaceae</taxon>
        <taxon>Shewanella</taxon>
    </lineage>
</organism>
<protein>
    <recommendedName>
        <fullName evidence="1">Integration host factor subunit alpha</fullName>
        <shortName evidence="1">IHF-alpha</shortName>
    </recommendedName>
</protein>
<feature type="chain" id="PRO_1000080037" description="Integration host factor subunit alpha">
    <location>
        <begin position="1"/>
        <end position="98"/>
    </location>
</feature>
<feature type="region of interest" description="Disordered" evidence="2">
    <location>
        <begin position="49"/>
        <end position="70"/>
    </location>
</feature>
<accession>A9KYZ2</accession>